<reference evidence="3" key="1">
    <citation type="journal article" date="1988" name="Mol. Biochem. Parasitol.">
        <title>Nucleotide sequence analysis of an Entamoeba histolytica ferredoxin gene.</title>
        <authorList>
            <person name="Huber M."/>
            <person name="Garfinkel L."/>
            <person name="Gitler C."/>
            <person name="Mirelman D."/>
            <person name="Revel M."/>
            <person name="Rozenblatt S."/>
        </authorList>
    </citation>
    <scope>NUCLEOTIDE SEQUENCE [MRNA]</scope>
    <source>
        <strain evidence="3">ATCC 30459 / HM-1:IMSS / ABRM</strain>
    </source>
</reference>
<reference evidence="5" key="2">
    <citation type="journal article" date="2005" name="Nature">
        <title>The genome of the protist parasite Entamoeba histolytica.</title>
        <authorList>
            <person name="Loftus B.J."/>
            <person name="Anderson I."/>
            <person name="Davies R."/>
            <person name="Alsmark U.C."/>
            <person name="Samuelson J."/>
            <person name="Amedeo P."/>
            <person name="Roncaglia P."/>
            <person name="Berriman M."/>
            <person name="Hirt R.P."/>
            <person name="Mann B.J."/>
            <person name="Nozaki T."/>
            <person name="Suh B."/>
            <person name="Pop M."/>
            <person name="Duchene M."/>
            <person name="Ackers J."/>
            <person name="Tannich E."/>
            <person name="Leippe M."/>
            <person name="Hofer M."/>
            <person name="Bruchhaus I."/>
            <person name="Willhoeft U."/>
            <person name="Bhattacharya A."/>
            <person name="Chillingworth T."/>
            <person name="Churcher C.M."/>
            <person name="Hance Z."/>
            <person name="Harris B."/>
            <person name="Harris D."/>
            <person name="Jagels K."/>
            <person name="Moule S."/>
            <person name="Mungall K.L."/>
            <person name="Ormond D."/>
            <person name="Squares R."/>
            <person name="Whitehead S."/>
            <person name="Quail M.A."/>
            <person name="Rabbinowitsch E."/>
            <person name="Norbertczak H."/>
            <person name="Price C."/>
            <person name="Wang Z."/>
            <person name="Guillen N."/>
            <person name="Gilchrist C."/>
            <person name="Stroup S.E."/>
            <person name="Bhattacharya S."/>
            <person name="Lohia A."/>
            <person name="Foster P.G."/>
            <person name="Sicheritz-Ponten T."/>
            <person name="Weber C."/>
            <person name="Singh U."/>
            <person name="Mukherjee C."/>
            <person name="El-Sayed N.M.A."/>
            <person name="Petri W.A."/>
            <person name="Clark C.G."/>
            <person name="Embley T.M."/>
            <person name="Barrell B.G."/>
            <person name="Fraser C.M."/>
            <person name="Hall N."/>
        </authorList>
    </citation>
    <scope>NUCLEOTIDE SEQUENCE [LARGE SCALE GENOMIC DNA]</scope>
    <source>
        <strain evidence="5">ATCC 30459 / HM-1:IMSS / ABRM</strain>
    </source>
</reference>
<reference evidence="4" key="3">
    <citation type="journal article" date="1995" name="Mol. Biochem. Parasitol.">
        <title>Transient expression of luciferase in Entamoeba histolytica driven by the ferredoxin gene 5' and 3' regions.</title>
        <authorList>
            <person name="Gilchrist C.A."/>
            <person name="Streets H.L."/>
            <person name="Ackers J.P."/>
            <person name="Hall R."/>
        </authorList>
    </citation>
    <scope>NUCLEOTIDE SEQUENCE [GENOMIC DNA / MRNA] OF 1-8</scope>
    <source>
        <strain evidence="4">200:NIH</strain>
    </source>
</reference>
<name>FER_ENTH1</name>
<protein>
    <recommendedName>
        <fullName evidence="2">Ferredoxin</fullName>
    </recommendedName>
</protein>
<evidence type="ECO:0000255" key="1">
    <source>
        <dbReference type="PROSITE-ProRule" id="PRU00711"/>
    </source>
</evidence>
<evidence type="ECO:0000303" key="2">
    <source>
    </source>
</evidence>
<evidence type="ECO:0000312" key="3">
    <source>
        <dbReference type="EMBL" id="AAA29098.1"/>
    </source>
</evidence>
<evidence type="ECO:0000312" key="4">
    <source>
        <dbReference type="EMBL" id="AAC41611.1"/>
    </source>
</evidence>
<evidence type="ECO:0000312" key="5">
    <source>
        <dbReference type="EMBL" id="EAL49795.1"/>
    </source>
</evidence>
<comment type="function">
    <text>Ferredoxins are iron-sulfur proteins that transfer electrons in a wide variety of metabolic reactions.</text>
</comment>
<comment type="cofactor">
    <cofactor evidence="1">
        <name>[4Fe-4S] cluster</name>
        <dbReference type="ChEBI" id="CHEBI:49883"/>
    </cofactor>
    <text evidence="1">Binds 2 [4Fe-4S] clusters.</text>
</comment>
<gene>
    <name evidence="5" type="ORF">EHI_198670</name>
</gene>
<feature type="chain" id="PRO_0000159160" description="Ferredoxin">
    <location>
        <begin position="1"/>
        <end position="59"/>
    </location>
</feature>
<feature type="domain" description="4Fe-4S ferredoxin-type 1" evidence="1">
    <location>
        <begin position="2"/>
        <end position="30"/>
    </location>
</feature>
<feature type="domain" description="4Fe-4S ferredoxin-type 2" evidence="1">
    <location>
        <begin position="31"/>
        <end position="59"/>
    </location>
</feature>
<feature type="binding site" evidence="1">
    <location>
        <position position="12"/>
    </location>
    <ligand>
        <name>[4Fe-4S] cluster</name>
        <dbReference type="ChEBI" id="CHEBI:49883"/>
        <label>1</label>
    </ligand>
</feature>
<feature type="binding site" evidence="1">
    <location>
        <position position="15"/>
    </location>
    <ligand>
        <name>[4Fe-4S] cluster</name>
        <dbReference type="ChEBI" id="CHEBI:49883"/>
        <label>1</label>
    </ligand>
</feature>
<feature type="binding site" evidence="1">
    <location>
        <position position="18"/>
    </location>
    <ligand>
        <name>[4Fe-4S] cluster</name>
        <dbReference type="ChEBI" id="CHEBI:49883"/>
        <label>1</label>
    </ligand>
</feature>
<feature type="binding site" evidence="1">
    <location>
        <position position="22"/>
    </location>
    <ligand>
        <name>[4Fe-4S] cluster</name>
        <dbReference type="ChEBI" id="CHEBI:49883"/>
        <label>1</label>
    </ligand>
</feature>
<feature type="binding site" evidence="1">
    <location>
        <position position="41"/>
    </location>
    <ligand>
        <name>[4Fe-4S] cluster</name>
        <dbReference type="ChEBI" id="CHEBI:49883"/>
        <label>2</label>
    </ligand>
</feature>
<feature type="binding site" evidence="1">
    <location>
        <position position="44"/>
    </location>
    <ligand>
        <name>[4Fe-4S] cluster</name>
        <dbReference type="ChEBI" id="CHEBI:49883"/>
        <label>2</label>
    </ligand>
</feature>
<feature type="binding site" evidence="1">
    <location>
        <position position="47"/>
    </location>
    <ligand>
        <name>[4Fe-4S] cluster</name>
        <dbReference type="ChEBI" id="CHEBI:49883"/>
        <label>2</label>
    </ligand>
</feature>
<feature type="binding site" evidence="1">
    <location>
        <position position="51"/>
    </location>
    <ligand>
        <name>[4Fe-4S] cluster</name>
        <dbReference type="ChEBI" id="CHEBI:49883"/>
        <label>2</label>
    </ligand>
</feature>
<dbReference type="EMBL" id="J03970">
    <property type="protein sequence ID" value="AAA29098.1"/>
    <property type="molecule type" value="mRNA"/>
</dbReference>
<dbReference type="EMBL" id="DS571165">
    <property type="protein sequence ID" value="EAL49795.1"/>
    <property type="molecule type" value="Genomic_DNA"/>
</dbReference>
<dbReference type="EMBL" id="L43139">
    <property type="protein sequence ID" value="AAC41611.1"/>
    <property type="molecule type" value="Genomic_DNA"/>
</dbReference>
<dbReference type="PIR" id="A54516">
    <property type="entry name" value="A54516"/>
</dbReference>
<dbReference type="RefSeq" id="XP_655182.1">
    <property type="nucleotide sequence ID" value="XM_650090.2"/>
</dbReference>
<dbReference type="SMR" id="P11425"/>
<dbReference type="EnsemblProtists" id="GAT93154">
    <property type="protein sequence ID" value="GAT93154"/>
    <property type="gene ID" value="CL6EHI_198670"/>
</dbReference>
<dbReference type="EnsemblProtists" id="GAT93155">
    <property type="protein sequence ID" value="GAT93155"/>
    <property type="gene ID" value="CL6EHI_c00052"/>
</dbReference>
<dbReference type="EnsemblProtists" id="rna_EHI_198670-1">
    <property type="protein sequence ID" value="rna_EHI_198670-1"/>
    <property type="gene ID" value="EHI_198670"/>
</dbReference>
<dbReference type="GeneID" id="3409502"/>
<dbReference type="KEGG" id="ehi:EHI_198670"/>
<dbReference type="VEuPathDB" id="AmoebaDB:EHI5A_055540"/>
<dbReference type="VEuPathDB" id="AmoebaDB:EHI_198670"/>
<dbReference type="OMA" id="NDCVACG"/>
<dbReference type="OrthoDB" id="410581at2759"/>
<dbReference type="Proteomes" id="UP000001926">
    <property type="component" value="Partially assembled WGS sequence"/>
</dbReference>
<dbReference type="GO" id="GO:0051539">
    <property type="term" value="F:4 iron, 4 sulfur cluster binding"/>
    <property type="evidence" value="ECO:0007669"/>
    <property type="project" value="UniProtKB-KW"/>
</dbReference>
<dbReference type="GO" id="GO:0046872">
    <property type="term" value="F:metal ion binding"/>
    <property type="evidence" value="ECO:0007669"/>
    <property type="project" value="UniProtKB-KW"/>
</dbReference>
<dbReference type="Gene3D" id="3.30.70.20">
    <property type="match status" value="1"/>
</dbReference>
<dbReference type="InterPro" id="IPR017896">
    <property type="entry name" value="4Fe4S_Fe-S-bd"/>
</dbReference>
<dbReference type="InterPro" id="IPR017900">
    <property type="entry name" value="4Fe4S_Fe_S_CS"/>
</dbReference>
<dbReference type="InterPro" id="IPR050572">
    <property type="entry name" value="Fe-S_Ferredoxin"/>
</dbReference>
<dbReference type="PANTHER" id="PTHR43687">
    <property type="entry name" value="ADENYLYLSULFATE REDUCTASE, BETA SUBUNIT"/>
    <property type="match status" value="1"/>
</dbReference>
<dbReference type="PANTHER" id="PTHR43687:SF6">
    <property type="entry name" value="L-ASPARTATE SEMIALDEHYDE SULFURTRANSFERASE IRON-SULFUR SUBUNIT"/>
    <property type="match status" value="1"/>
</dbReference>
<dbReference type="Pfam" id="PF13237">
    <property type="entry name" value="Fer4_10"/>
    <property type="match status" value="1"/>
</dbReference>
<dbReference type="SUPFAM" id="SSF54862">
    <property type="entry name" value="4Fe-4S ferredoxins"/>
    <property type="match status" value="1"/>
</dbReference>
<dbReference type="PROSITE" id="PS00198">
    <property type="entry name" value="4FE4S_FER_1"/>
    <property type="match status" value="2"/>
</dbReference>
<dbReference type="PROSITE" id="PS51379">
    <property type="entry name" value="4FE4S_FER_2"/>
    <property type="match status" value="2"/>
</dbReference>
<sequence length="59" mass="6052">MGKITIVNIDDCVACGACSGTCPQSVLEVNDHVEIKNPDDCIGCGACVDACPQGVLKVE</sequence>
<organism evidence="5">
    <name type="scientific">Entamoeba histolytica (strain ATCC 30459 / HM-1:IMSS / ABRM)</name>
    <dbReference type="NCBI Taxonomy" id="294381"/>
    <lineage>
        <taxon>Eukaryota</taxon>
        <taxon>Amoebozoa</taxon>
        <taxon>Evosea</taxon>
        <taxon>Archamoebae</taxon>
        <taxon>Mastigamoebida</taxon>
        <taxon>Entamoebidae</taxon>
        <taxon>Entamoeba</taxon>
    </lineage>
</organism>
<proteinExistence type="inferred from homology"/>
<keyword id="KW-0004">4Fe-4S</keyword>
<keyword id="KW-0249">Electron transport</keyword>
<keyword id="KW-0408">Iron</keyword>
<keyword id="KW-0411">Iron-sulfur</keyword>
<keyword id="KW-0479">Metal-binding</keyword>
<keyword id="KW-1185">Reference proteome</keyword>
<keyword id="KW-0677">Repeat</keyword>
<keyword id="KW-0813">Transport</keyword>
<accession>P11425</accession>
<accession>A0A175JI75</accession>
<accession>C4LWR3</accession>